<gene>
    <name evidence="1" type="primary">lysS</name>
    <name type="ordered locus">SSA_1529</name>
</gene>
<reference key="1">
    <citation type="journal article" date="2007" name="J. Bacteriol.">
        <title>Genome of the opportunistic pathogen Streptococcus sanguinis.</title>
        <authorList>
            <person name="Xu P."/>
            <person name="Alves J.M."/>
            <person name="Kitten T."/>
            <person name="Brown A."/>
            <person name="Chen Z."/>
            <person name="Ozaki L.S."/>
            <person name="Manque P."/>
            <person name="Ge X."/>
            <person name="Serrano M.G."/>
            <person name="Puiu D."/>
            <person name="Hendricks S."/>
            <person name="Wang Y."/>
            <person name="Chaplin M.D."/>
            <person name="Akan D."/>
            <person name="Paik S."/>
            <person name="Peterson D.L."/>
            <person name="Macrina F.L."/>
            <person name="Buck G.A."/>
        </authorList>
    </citation>
    <scope>NUCLEOTIDE SEQUENCE [LARGE SCALE GENOMIC DNA]</scope>
    <source>
        <strain>SK36</strain>
    </source>
</reference>
<protein>
    <recommendedName>
        <fullName evidence="1">Lysine--tRNA ligase</fullName>
        <ecNumber evidence="1">6.1.1.6</ecNumber>
    </recommendedName>
    <alternativeName>
        <fullName evidence="1">Lysyl-tRNA synthetase</fullName>
        <shortName evidence="1">LysRS</shortName>
    </alternativeName>
</protein>
<dbReference type="EC" id="6.1.1.6" evidence="1"/>
<dbReference type="EMBL" id="CP000387">
    <property type="protein sequence ID" value="ABN44922.1"/>
    <property type="molecule type" value="Genomic_DNA"/>
</dbReference>
<dbReference type="RefSeq" id="WP_002894992.1">
    <property type="nucleotide sequence ID" value="NC_009009.1"/>
</dbReference>
<dbReference type="RefSeq" id="YP_001035472.1">
    <property type="nucleotide sequence ID" value="NC_009009.1"/>
</dbReference>
<dbReference type="SMR" id="A3CP17"/>
<dbReference type="STRING" id="388919.SSA_1529"/>
<dbReference type="GeneID" id="48425904"/>
<dbReference type="KEGG" id="ssa:SSA_1529"/>
<dbReference type="PATRIC" id="fig|388919.9.peg.1452"/>
<dbReference type="eggNOG" id="COG1190">
    <property type="taxonomic scope" value="Bacteria"/>
</dbReference>
<dbReference type="HOGENOM" id="CLU_008255_6_0_9"/>
<dbReference type="OrthoDB" id="9801152at2"/>
<dbReference type="Proteomes" id="UP000002148">
    <property type="component" value="Chromosome"/>
</dbReference>
<dbReference type="GO" id="GO:0005829">
    <property type="term" value="C:cytosol"/>
    <property type="evidence" value="ECO:0007669"/>
    <property type="project" value="TreeGrafter"/>
</dbReference>
<dbReference type="GO" id="GO:0005524">
    <property type="term" value="F:ATP binding"/>
    <property type="evidence" value="ECO:0007669"/>
    <property type="project" value="UniProtKB-UniRule"/>
</dbReference>
<dbReference type="GO" id="GO:0140096">
    <property type="term" value="F:catalytic activity, acting on a protein"/>
    <property type="evidence" value="ECO:0007669"/>
    <property type="project" value="UniProtKB-ARBA"/>
</dbReference>
<dbReference type="GO" id="GO:0004824">
    <property type="term" value="F:lysine-tRNA ligase activity"/>
    <property type="evidence" value="ECO:0007669"/>
    <property type="project" value="UniProtKB-UniRule"/>
</dbReference>
<dbReference type="GO" id="GO:0000287">
    <property type="term" value="F:magnesium ion binding"/>
    <property type="evidence" value="ECO:0007669"/>
    <property type="project" value="UniProtKB-UniRule"/>
</dbReference>
<dbReference type="GO" id="GO:0016740">
    <property type="term" value="F:transferase activity"/>
    <property type="evidence" value="ECO:0007669"/>
    <property type="project" value="UniProtKB-ARBA"/>
</dbReference>
<dbReference type="GO" id="GO:0000049">
    <property type="term" value="F:tRNA binding"/>
    <property type="evidence" value="ECO:0007669"/>
    <property type="project" value="TreeGrafter"/>
</dbReference>
<dbReference type="GO" id="GO:0006430">
    <property type="term" value="P:lysyl-tRNA aminoacylation"/>
    <property type="evidence" value="ECO:0007669"/>
    <property type="project" value="UniProtKB-UniRule"/>
</dbReference>
<dbReference type="CDD" id="cd00775">
    <property type="entry name" value="LysRS_core"/>
    <property type="match status" value="1"/>
</dbReference>
<dbReference type="CDD" id="cd04322">
    <property type="entry name" value="LysRS_N"/>
    <property type="match status" value="1"/>
</dbReference>
<dbReference type="FunFam" id="2.40.50.140:FF:000024">
    <property type="entry name" value="Lysine--tRNA ligase"/>
    <property type="match status" value="1"/>
</dbReference>
<dbReference type="FunFam" id="3.30.930.10:FF:000001">
    <property type="entry name" value="Lysine--tRNA ligase"/>
    <property type="match status" value="1"/>
</dbReference>
<dbReference type="Gene3D" id="3.30.930.10">
    <property type="entry name" value="Bira Bifunctional Protein, Domain 2"/>
    <property type="match status" value="1"/>
</dbReference>
<dbReference type="Gene3D" id="2.40.50.140">
    <property type="entry name" value="Nucleic acid-binding proteins"/>
    <property type="match status" value="1"/>
</dbReference>
<dbReference type="HAMAP" id="MF_00252">
    <property type="entry name" value="Lys_tRNA_synth_class2"/>
    <property type="match status" value="1"/>
</dbReference>
<dbReference type="InterPro" id="IPR004364">
    <property type="entry name" value="Aa-tRNA-synt_II"/>
</dbReference>
<dbReference type="InterPro" id="IPR006195">
    <property type="entry name" value="aa-tRNA-synth_II"/>
</dbReference>
<dbReference type="InterPro" id="IPR045864">
    <property type="entry name" value="aa-tRNA-synth_II/BPL/LPL"/>
</dbReference>
<dbReference type="InterPro" id="IPR002313">
    <property type="entry name" value="Lys-tRNA-ligase_II"/>
</dbReference>
<dbReference type="InterPro" id="IPR044136">
    <property type="entry name" value="Lys-tRNA-ligase_II_N"/>
</dbReference>
<dbReference type="InterPro" id="IPR018149">
    <property type="entry name" value="Lys-tRNA-synth_II_C"/>
</dbReference>
<dbReference type="InterPro" id="IPR012340">
    <property type="entry name" value="NA-bd_OB-fold"/>
</dbReference>
<dbReference type="InterPro" id="IPR004365">
    <property type="entry name" value="NA-bd_OB_tRNA"/>
</dbReference>
<dbReference type="NCBIfam" id="TIGR00499">
    <property type="entry name" value="lysS_bact"/>
    <property type="match status" value="1"/>
</dbReference>
<dbReference type="NCBIfam" id="NF001756">
    <property type="entry name" value="PRK00484.1"/>
    <property type="match status" value="1"/>
</dbReference>
<dbReference type="PANTHER" id="PTHR42918:SF15">
    <property type="entry name" value="LYSINE--TRNA LIGASE, CHLOROPLASTIC_MITOCHONDRIAL"/>
    <property type="match status" value="1"/>
</dbReference>
<dbReference type="PANTHER" id="PTHR42918">
    <property type="entry name" value="LYSYL-TRNA SYNTHETASE"/>
    <property type="match status" value="1"/>
</dbReference>
<dbReference type="Pfam" id="PF00152">
    <property type="entry name" value="tRNA-synt_2"/>
    <property type="match status" value="1"/>
</dbReference>
<dbReference type="Pfam" id="PF01336">
    <property type="entry name" value="tRNA_anti-codon"/>
    <property type="match status" value="1"/>
</dbReference>
<dbReference type="PRINTS" id="PR00982">
    <property type="entry name" value="TRNASYNTHLYS"/>
</dbReference>
<dbReference type="SUPFAM" id="SSF55681">
    <property type="entry name" value="Class II aaRS and biotin synthetases"/>
    <property type="match status" value="1"/>
</dbReference>
<dbReference type="SUPFAM" id="SSF50249">
    <property type="entry name" value="Nucleic acid-binding proteins"/>
    <property type="match status" value="1"/>
</dbReference>
<dbReference type="PROSITE" id="PS50862">
    <property type="entry name" value="AA_TRNA_LIGASE_II"/>
    <property type="match status" value="1"/>
</dbReference>
<evidence type="ECO:0000255" key="1">
    <source>
        <dbReference type="HAMAP-Rule" id="MF_00252"/>
    </source>
</evidence>
<accession>A3CP17</accession>
<organism>
    <name type="scientific">Streptococcus sanguinis (strain SK36)</name>
    <dbReference type="NCBI Taxonomy" id="388919"/>
    <lineage>
        <taxon>Bacteria</taxon>
        <taxon>Bacillati</taxon>
        <taxon>Bacillota</taxon>
        <taxon>Bacilli</taxon>
        <taxon>Lactobacillales</taxon>
        <taxon>Streptococcaceae</taxon>
        <taxon>Streptococcus</taxon>
    </lineage>
</organism>
<keyword id="KW-0030">Aminoacyl-tRNA synthetase</keyword>
<keyword id="KW-0067">ATP-binding</keyword>
<keyword id="KW-0963">Cytoplasm</keyword>
<keyword id="KW-0436">Ligase</keyword>
<keyword id="KW-0460">Magnesium</keyword>
<keyword id="KW-0479">Metal-binding</keyword>
<keyword id="KW-0547">Nucleotide-binding</keyword>
<keyword id="KW-0648">Protein biosynthesis</keyword>
<keyword id="KW-1185">Reference proteome</keyword>
<proteinExistence type="inferred from homology"/>
<name>SYK_STRSV</name>
<sequence>MTTEHIEELNDQQIIRREKMAALAEQGIDPFGKRFERTANSAQLKEKYNDKDKEELNELNETAIIAGRLMTKRGKGKVGFAHIQDREGQIQIYVRKDAVGEENYEIFKKADLGDFLGIEGEIMRTDMGELSIKATHLTHLSKALRPLPEKFHGLTDVETIYRKRYLDLISNRESFERFVTRSKIISEIRRYLDGQGFLEVETPVLHNEAGGAAARPFITHHNAQNIDMVLRIATELHLKRLIVGGMERVYEIGRIFRNEGMDATHNPEFTSIEVYQAYADFQDIMDLTEGIIQHAAVSVNGDGPVNYQGTEIKINEPFKRVHMVDAIKEITGVDFWQDMSFEEAAALAQEKKVPLEKHFTEVGHVINAFFEEFVEETLIQPTFVYGHPVAVSPLAKKNPEDPRFTDRFELFIMTKEYANAFTELNDPIDQLSRFEAQAKAKELGDDEATGIDYDFVEALEYGMPPTGGLGIGIDRLVMLLTDVTTIRDVLLFPTMK</sequence>
<feature type="chain" id="PRO_1000012949" description="Lysine--tRNA ligase">
    <location>
        <begin position="1"/>
        <end position="496"/>
    </location>
</feature>
<feature type="binding site" evidence="1">
    <location>
        <position position="409"/>
    </location>
    <ligand>
        <name>Mg(2+)</name>
        <dbReference type="ChEBI" id="CHEBI:18420"/>
        <label>1</label>
    </ligand>
</feature>
<feature type="binding site" evidence="1">
    <location>
        <position position="416"/>
    </location>
    <ligand>
        <name>Mg(2+)</name>
        <dbReference type="ChEBI" id="CHEBI:18420"/>
        <label>1</label>
    </ligand>
</feature>
<feature type="binding site" evidence="1">
    <location>
        <position position="416"/>
    </location>
    <ligand>
        <name>Mg(2+)</name>
        <dbReference type="ChEBI" id="CHEBI:18420"/>
        <label>2</label>
    </ligand>
</feature>
<comment type="catalytic activity">
    <reaction evidence="1">
        <text>tRNA(Lys) + L-lysine + ATP = L-lysyl-tRNA(Lys) + AMP + diphosphate</text>
        <dbReference type="Rhea" id="RHEA:20792"/>
        <dbReference type="Rhea" id="RHEA-COMP:9696"/>
        <dbReference type="Rhea" id="RHEA-COMP:9697"/>
        <dbReference type="ChEBI" id="CHEBI:30616"/>
        <dbReference type="ChEBI" id="CHEBI:32551"/>
        <dbReference type="ChEBI" id="CHEBI:33019"/>
        <dbReference type="ChEBI" id="CHEBI:78442"/>
        <dbReference type="ChEBI" id="CHEBI:78529"/>
        <dbReference type="ChEBI" id="CHEBI:456215"/>
        <dbReference type="EC" id="6.1.1.6"/>
    </reaction>
</comment>
<comment type="cofactor">
    <cofactor evidence="1">
        <name>Mg(2+)</name>
        <dbReference type="ChEBI" id="CHEBI:18420"/>
    </cofactor>
    <text evidence="1">Binds 3 Mg(2+) ions per subunit.</text>
</comment>
<comment type="subunit">
    <text evidence="1">Homodimer.</text>
</comment>
<comment type="subcellular location">
    <subcellularLocation>
        <location evidence="1">Cytoplasm</location>
    </subcellularLocation>
</comment>
<comment type="similarity">
    <text evidence="1">Belongs to the class-II aminoacyl-tRNA synthetase family.</text>
</comment>